<gene>
    <name evidence="1" type="primary">pnp</name>
    <name type="ordered locus">Dvul_2438</name>
</gene>
<protein>
    <recommendedName>
        <fullName evidence="1">Polyribonucleotide nucleotidyltransferase</fullName>
        <ecNumber evidence="1">2.7.7.8</ecNumber>
    </recommendedName>
    <alternativeName>
        <fullName evidence="1">Polynucleotide phosphorylase</fullName>
        <shortName evidence="1">PNPase</shortName>
    </alternativeName>
</protein>
<sequence length="760" mass="82199">MTNIFNAMRVTATVGGKEIVFETGRLANQADGAVWIQCGGTVVLVTACSQATDRDLGFFPLTVEYSEKMYAAGRIPGSFFRREIGRPSERETLVSRLIDRPIRPLFPKGLKDEVQVLANVISSDQNNDSDVLAVTGASTALGLSSIPFDGPVAGARIGRIDGQFVINPTIKEMERSDLNIVLAASRDAVVMVEGEASFVPEAVIVEALEWGHKEIQPLIDAQLKLREMAGKAKREFTAPVEDADLAARVAALATADLDVALRIPEKMARKDARKAVKEKVMEALVADPAYAEDTTPLRAVGDILSALEKRIVRERIVREGRRIDGRDTTTVRPILIEAGILPRAHGSALFARGETKSLVVATLGSSTDEQRMDSLTGDVTKRFMLHYNFAPYCVGEVKPVRVSRREIGHGALAEKALRPILPLGEDFPFTLRVVAETMESNGSSSMAAVCGGCLSLMDAGVPITAPVAGVAMGLIKEGDQYVVLTDILGDEDALGDMDFKIAGTSEGITAVQMDIKVKGLPTDVMARAMQQARDARLHILGEMGKVLEAPRAELSAYAPQHAEVFVNPDIIRIIIGPGGKNIKAITATTGASIDIEDSGRVSIFAPTLEAMEMAREMVQYYDQRADIGKNYTGKVRKVLEIGAIVEILPNLEALVHISQLDTNRVEQASDVARLGEDMVVKVIEINGDRIRASRKAVLLEEQGIEWKPEDTARPSGPREGGRRDGGRDGRRDGGRDGRRDGGRDGGRRDGGRRDGGRDRN</sequence>
<evidence type="ECO:0000255" key="1">
    <source>
        <dbReference type="HAMAP-Rule" id="MF_01595"/>
    </source>
</evidence>
<evidence type="ECO:0000256" key="2">
    <source>
        <dbReference type="SAM" id="MobiDB-lite"/>
    </source>
</evidence>
<accession>A1VG88</accession>
<dbReference type="EC" id="2.7.7.8" evidence="1"/>
<dbReference type="EMBL" id="CP000527">
    <property type="protein sequence ID" value="ABM29454.1"/>
    <property type="molecule type" value="Genomic_DNA"/>
</dbReference>
<dbReference type="RefSeq" id="WP_010937809.1">
    <property type="nucleotide sequence ID" value="NC_008751.1"/>
</dbReference>
<dbReference type="SMR" id="A1VG88"/>
<dbReference type="KEGG" id="dvl:Dvul_2438"/>
<dbReference type="HOGENOM" id="CLU_004217_2_2_7"/>
<dbReference type="Proteomes" id="UP000009173">
    <property type="component" value="Chromosome"/>
</dbReference>
<dbReference type="GO" id="GO:0005829">
    <property type="term" value="C:cytosol"/>
    <property type="evidence" value="ECO:0007669"/>
    <property type="project" value="TreeGrafter"/>
</dbReference>
<dbReference type="GO" id="GO:0000175">
    <property type="term" value="F:3'-5'-RNA exonuclease activity"/>
    <property type="evidence" value="ECO:0007669"/>
    <property type="project" value="TreeGrafter"/>
</dbReference>
<dbReference type="GO" id="GO:0000287">
    <property type="term" value="F:magnesium ion binding"/>
    <property type="evidence" value="ECO:0007669"/>
    <property type="project" value="UniProtKB-UniRule"/>
</dbReference>
<dbReference type="GO" id="GO:0004654">
    <property type="term" value="F:polyribonucleotide nucleotidyltransferase activity"/>
    <property type="evidence" value="ECO:0007669"/>
    <property type="project" value="UniProtKB-UniRule"/>
</dbReference>
<dbReference type="GO" id="GO:0003723">
    <property type="term" value="F:RNA binding"/>
    <property type="evidence" value="ECO:0007669"/>
    <property type="project" value="UniProtKB-UniRule"/>
</dbReference>
<dbReference type="GO" id="GO:0006402">
    <property type="term" value="P:mRNA catabolic process"/>
    <property type="evidence" value="ECO:0007669"/>
    <property type="project" value="UniProtKB-UniRule"/>
</dbReference>
<dbReference type="GO" id="GO:0006396">
    <property type="term" value="P:RNA processing"/>
    <property type="evidence" value="ECO:0007669"/>
    <property type="project" value="InterPro"/>
</dbReference>
<dbReference type="CDD" id="cd02393">
    <property type="entry name" value="KH-I_PNPase"/>
    <property type="match status" value="1"/>
</dbReference>
<dbReference type="CDD" id="cd11363">
    <property type="entry name" value="RNase_PH_PNPase_1"/>
    <property type="match status" value="1"/>
</dbReference>
<dbReference type="CDD" id="cd11364">
    <property type="entry name" value="RNase_PH_PNPase_2"/>
    <property type="match status" value="1"/>
</dbReference>
<dbReference type="FunFam" id="3.30.1370.10:FF:000001">
    <property type="entry name" value="Polyribonucleotide nucleotidyltransferase"/>
    <property type="match status" value="1"/>
</dbReference>
<dbReference type="FunFam" id="3.30.230.70:FF:000001">
    <property type="entry name" value="Polyribonucleotide nucleotidyltransferase"/>
    <property type="match status" value="1"/>
</dbReference>
<dbReference type="FunFam" id="3.30.230.70:FF:000002">
    <property type="entry name" value="Polyribonucleotide nucleotidyltransferase"/>
    <property type="match status" value="1"/>
</dbReference>
<dbReference type="Gene3D" id="3.30.230.70">
    <property type="entry name" value="GHMP Kinase, N-terminal domain"/>
    <property type="match status" value="2"/>
</dbReference>
<dbReference type="Gene3D" id="3.30.1370.10">
    <property type="entry name" value="K Homology domain, type 1"/>
    <property type="match status" value="1"/>
</dbReference>
<dbReference type="Gene3D" id="2.40.50.140">
    <property type="entry name" value="Nucleic acid-binding proteins"/>
    <property type="match status" value="1"/>
</dbReference>
<dbReference type="HAMAP" id="MF_01595">
    <property type="entry name" value="PNPase"/>
    <property type="match status" value="1"/>
</dbReference>
<dbReference type="InterPro" id="IPR001247">
    <property type="entry name" value="ExoRNase_PH_dom1"/>
</dbReference>
<dbReference type="InterPro" id="IPR015847">
    <property type="entry name" value="ExoRNase_PH_dom2"/>
</dbReference>
<dbReference type="InterPro" id="IPR036345">
    <property type="entry name" value="ExoRNase_PH_dom2_sf"/>
</dbReference>
<dbReference type="InterPro" id="IPR004087">
    <property type="entry name" value="KH_dom"/>
</dbReference>
<dbReference type="InterPro" id="IPR004088">
    <property type="entry name" value="KH_dom_type_1"/>
</dbReference>
<dbReference type="InterPro" id="IPR036612">
    <property type="entry name" value="KH_dom_type_1_sf"/>
</dbReference>
<dbReference type="InterPro" id="IPR012340">
    <property type="entry name" value="NA-bd_OB-fold"/>
</dbReference>
<dbReference type="InterPro" id="IPR012162">
    <property type="entry name" value="PNPase"/>
</dbReference>
<dbReference type="InterPro" id="IPR027408">
    <property type="entry name" value="PNPase/RNase_PH_dom_sf"/>
</dbReference>
<dbReference type="InterPro" id="IPR015848">
    <property type="entry name" value="PNPase_PH_RNA-bd_bac/org-type"/>
</dbReference>
<dbReference type="InterPro" id="IPR020568">
    <property type="entry name" value="Ribosomal_Su5_D2-typ_SF"/>
</dbReference>
<dbReference type="InterPro" id="IPR003029">
    <property type="entry name" value="S1_domain"/>
</dbReference>
<dbReference type="NCBIfam" id="TIGR03591">
    <property type="entry name" value="polynuc_phos"/>
    <property type="match status" value="1"/>
</dbReference>
<dbReference type="NCBIfam" id="NF008805">
    <property type="entry name" value="PRK11824.1"/>
    <property type="match status" value="1"/>
</dbReference>
<dbReference type="PANTHER" id="PTHR11252">
    <property type="entry name" value="POLYRIBONUCLEOTIDE NUCLEOTIDYLTRANSFERASE"/>
    <property type="match status" value="1"/>
</dbReference>
<dbReference type="PANTHER" id="PTHR11252:SF0">
    <property type="entry name" value="POLYRIBONUCLEOTIDE NUCLEOTIDYLTRANSFERASE 1, MITOCHONDRIAL"/>
    <property type="match status" value="1"/>
</dbReference>
<dbReference type="Pfam" id="PF00013">
    <property type="entry name" value="KH_1"/>
    <property type="match status" value="1"/>
</dbReference>
<dbReference type="Pfam" id="PF03726">
    <property type="entry name" value="PNPase"/>
    <property type="match status" value="1"/>
</dbReference>
<dbReference type="Pfam" id="PF01138">
    <property type="entry name" value="RNase_PH"/>
    <property type="match status" value="2"/>
</dbReference>
<dbReference type="Pfam" id="PF03725">
    <property type="entry name" value="RNase_PH_C"/>
    <property type="match status" value="2"/>
</dbReference>
<dbReference type="Pfam" id="PF00575">
    <property type="entry name" value="S1"/>
    <property type="match status" value="1"/>
</dbReference>
<dbReference type="PIRSF" id="PIRSF005499">
    <property type="entry name" value="PNPase"/>
    <property type="match status" value="1"/>
</dbReference>
<dbReference type="SMART" id="SM00322">
    <property type="entry name" value="KH"/>
    <property type="match status" value="1"/>
</dbReference>
<dbReference type="SMART" id="SM00316">
    <property type="entry name" value="S1"/>
    <property type="match status" value="1"/>
</dbReference>
<dbReference type="SUPFAM" id="SSF54791">
    <property type="entry name" value="Eukaryotic type KH-domain (KH-domain type I)"/>
    <property type="match status" value="1"/>
</dbReference>
<dbReference type="SUPFAM" id="SSF50249">
    <property type="entry name" value="Nucleic acid-binding proteins"/>
    <property type="match status" value="1"/>
</dbReference>
<dbReference type="SUPFAM" id="SSF55666">
    <property type="entry name" value="Ribonuclease PH domain 2-like"/>
    <property type="match status" value="2"/>
</dbReference>
<dbReference type="SUPFAM" id="SSF54211">
    <property type="entry name" value="Ribosomal protein S5 domain 2-like"/>
    <property type="match status" value="2"/>
</dbReference>
<dbReference type="PROSITE" id="PS50084">
    <property type="entry name" value="KH_TYPE_1"/>
    <property type="match status" value="1"/>
</dbReference>
<dbReference type="PROSITE" id="PS50126">
    <property type="entry name" value="S1"/>
    <property type="match status" value="1"/>
</dbReference>
<feature type="chain" id="PRO_0000329627" description="Polyribonucleotide nucleotidyltransferase">
    <location>
        <begin position="1"/>
        <end position="760"/>
    </location>
</feature>
<feature type="domain" description="KH" evidence="1">
    <location>
        <begin position="559"/>
        <end position="618"/>
    </location>
</feature>
<feature type="domain" description="S1 motif" evidence="1">
    <location>
        <begin position="628"/>
        <end position="702"/>
    </location>
</feature>
<feature type="region of interest" description="Disordered" evidence="2">
    <location>
        <begin position="706"/>
        <end position="760"/>
    </location>
</feature>
<feature type="compositionally biased region" description="Basic and acidic residues" evidence="2">
    <location>
        <begin position="719"/>
        <end position="760"/>
    </location>
</feature>
<feature type="binding site" evidence="1">
    <location>
        <position position="492"/>
    </location>
    <ligand>
        <name>Mg(2+)</name>
        <dbReference type="ChEBI" id="CHEBI:18420"/>
    </ligand>
</feature>
<feature type="binding site" evidence="1">
    <location>
        <position position="498"/>
    </location>
    <ligand>
        <name>Mg(2+)</name>
        <dbReference type="ChEBI" id="CHEBI:18420"/>
    </ligand>
</feature>
<name>PNP_NITV4</name>
<keyword id="KW-0963">Cytoplasm</keyword>
<keyword id="KW-0460">Magnesium</keyword>
<keyword id="KW-0479">Metal-binding</keyword>
<keyword id="KW-0548">Nucleotidyltransferase</keyword>
<keyword id="KW-0694">RNA-binding</keyword>
<keyword id="KW-0808">Transferase</keyword>
<organism>
    <name type="scientific">Nitratidesulfovibrio vulgaris (strain DP4)</name>
    <name type="common">Desulfovibrio vulgaris</name>
    <dbReference type="NCBI Taxonomy" id="391774"/>
    <lineage>
        <taxon>Bacteria</taxon>
        <taxon>Pseudomonadati</taxon>
        <taxon>Thermodesulfobacteriota</taxon>
        <taxon>Desulfovibrionia</taxon>
        <taxon>Desulfovibrionales</taxon>
        <taxon>Desulfovibrionaceae</taxon>
        <taxon>Nitratidesulfovibrio</taxon>
    </lineage>
</organism>
<comment type="function">
    <text evidence="1">Involved in mRNA degradation. Catalyzes the phosphorolysis of single-stranded polyribonucleotides processively in the 3'- to 5'-direction.</text>
</comment>
<comment type="catalytic activity">
    <reaction evidence="1">
        <text>RNA(n+1) + phosphate = RNA(n) + a ribonucleoside 5'-diphosphate</text>
        <dbReference type="Rhea" id="RHEA:22096"/>
        <dbReference type="Rhea" id="RHEA-COMP:14527"/>
        <dbReference type="Rhea" id="RHEA-COMP:17342"/>
        <dbReference type="ChEBI" id="CHEBI:43474"/>
        <dbReference type="ChEBI" id="CHEBI:57930"/>
        <dbReference type="ChEBI" id="CHEBI:140395"/>
        <dbReference type="EC" id="2.7.7.8"/>
    </reaction>
</comment>
<comment type="cofactor">
    <cofactor evidence="1">
        <name>Mg(2+)</name>
        <dbReference type="ChEBI" id="CHEBI:18420"/>
    </cofactor>
</comment>
<comment type="subcellular location">
    <subcellularLocation>
        <location evidence="1">Cytoplasm</location>
    </subcellularLocation>
</comment>
<comment type="similarity">
    <text evidence="1">Belongs to the polyribonucleotide nucleotidyltransferase family.</text>
</comment>
<proteinExistence type="inferred from homology"/>
<reference key="1">
    <citation type="journal article" date="2009" name="Environ. Microbiol.">
        <title>Contribution of mobile genetic elements to Desulfovibrio vulgaris genome plasticity.</title>
        <authorList>
            <person name="Walker C.B."/>
            <person name="Stolyar S."/>
            <person name="Chivian D."/>
            <person name="Pinel N."/>
            <person name="Gabster J.A."/>
            <person name="Dehal P.S."/>
            <person name="He Z."/>
            <person name="Yang Z.K."/>
            <person name="Yen H.C."/>
            <person name="Zhou J."/>
            <person name="Wall J.D."/>
            <person name="Hazen T.C."/>
            <person name="Arkin A.P."/>
            <person name="Stahl D.A."/>
        </authorList>
    </citation>
    <scope>NUCLEOTIDE SEQUENCE [LARGE SCALE GENOMIC DNA]</scope>
    <source>
        <strain>DP4</strain>
    </source>
</reference>